<protein>
    <recommendedName>
        <fullName>Snaclec factor X-activator 1 light chain 1</fullName>
        <shortName>VAFXA-I LC1</shortName>
    </recommendedName>
</protein>
<keyword id="KW-1204">Blood coagulation cascade activating toxin</keyword>
<keyword id="KW-0106">Calcium</keyword>
<keyword id="KW-0903">Direct protein sequencing</keyword>
<keyword id="KW-1015">Disulfide bond</keyword>
<keyword id="KW-0325">Glycoprotein</keyword>
<keyword id="KW-1199">Hemostasis impairing toxin</keyword>
<keyword id="KW-0479">Metal-binding</keyword>
<keyword id="KW-0964">Secreted</keyword>
<keyword id="KW-0800">Toxin</keyword>
<comment type="function">
    <text>Regulatory subunit of the blood coagulation factor X-activating enzyme. Activates coagulation factor X (F10) in a calcium-dependent manner by cleaving the Arg-Ile bond at position 234. Weakly hydrolyzes insulin B chain, fibrinogen and some components of the extracellular matrix in vitro, but does not activate prothrombin or plasminogen.</text>
</comment>
<comment type="subunit">
    <text>Heterotrimer; disulfide-linked. The heterotrimer consists of 1 heavy chain (a metalloproteinase) and 2 light chains: LC1 and LC2.</text>
</comment>
<comment type="subcellular location">
    <subcellularLocation>
        <location>Secreted</location>
    </subcellularLocation>
</comment>
<comment type="tissue specificity">
    <text>Expressed by the venom gland.</text>
</comment>
<comment type="PTM">
    <text>N-glycosylated.</text>
</comment>
<comment type="miscellaneous">
    <text>Calcium is required for ligand binding.</text>
</comment>
<comment type="similarity">
    <text evidence="2">Belongs to the snaclec family.</text>
</comment>
<accession>P0C8J2</accession>
<gene>
    <name type="primary">LC1</name>
</gene>
<evidence type="ECO:0000255" key="1">
    <source>
        <dbReference type="PROSITE-ProRule" id="PRU00040"/>
    </source>
</evidence>
<evidence type="ECO:0000305" key="2"/>
<feature type="chain" id="PRO_0000355312" description="Snaclec factor X-activator 1 light chain 1">
    <location>
        <begin position="1"/>
        <end position="13" status="greater than"/>
    </location>
</feature>
<feature type="domain" description="C-type lectin" evidence="1">
    <location>
        <begin position="11"/>
        <end position="13" status="greater than"/>
    </location>
</feature>
<feature type="disulfide bond" evidence="1">
    <location>
        <begin position="4"/>
        <end status="unknown"/>
    </location>
</feature>
<feature type="unsure residue" description="Assigned by comparison with orthologs">
    <location>
        <position position="4"/>
    </location>
</feature>
<feature type="non-terminal residue">
    <location>
        <position position="13"/>
    </location>
</feature>
<reference key="1">
    <citation type="journal article" date="2008" name="Toxicon">
        <title>Two coagulation factor X activators from Vipera a. ammodytes venom with potential to treat patients with dysfunctional factors IXa or VIIa.</title>
        <authorList>
            <person name="Leonardi A."/>
            <person name="Fox J.W."/>
            <person name="Trampus-Bakija A."/>
            <person name="Krizaj I."/>
        </authorList>
    </citation>
    <scope>PROTEIN SEQUENCE</scope>
    <source>
        <tissue>Venom</tissue>
    </source>
</reference>
<sequence>DFDCPXDWVXYDQ</sequence>
<proteinExistence type="evidence at protein level"/>
<name>SL1C1_VIPAA</name>
<organism>
    <name type="scientific">Vipera ammodytes ammodytes</name>
    <name type="common">Western sand viper</name>
    <dbReference type="NCBI Taxonomy" id="8705"/>
    <lineage>
        <taxon>Eukaryota</taxon>
        <taxon>Metazoa</taxon>
        <taxon>Chordata</taxon>
        <taxon>Craniata</taxon>
        <taxon>Vertebrata</taxon>
        <taxon>Euteleostomi</taxon>
        <taxon>Lepidosauria</taxon>
        <taxon>Squamata</taxon>
        <taxon>Bifurcata</taxon>
        <taxon>Unidentata</taxon>
        <taxon>Episquamata</taxon>
        <taxon>Toxicofera</taxon>
        <taxon>Serpentes</taxon>
        <taxon>Colubroidea</taxon>
        <taxon>Viperidae</taxon>
        <taxon>Viperinae</taxon>
        <taxon>Vipera</taxon>
    </lineage>
</organism>
<dbReference type="GO" id="GO:0005576">
    <property type="term" value="C:extracellular region"/>
    <property type="evidence" value="ECO:0007669"/>
    <property type="project" value="UniProtKB-SubCell"/>
</dbReference>
<dbReference type="GO" id="GO:0046872">
    <property type="term" value="F:metal ion binding"/>
    <property type="evidence" value="ECO:0007669"/>
    <property type="project" value="UniProtKB-KW"/>
</dbReference>
<dbReference type="GO" id="GO:0090729">
    <property type="term" value="F:toxin activity"/>
    <property type="evidence" value="ECO:0007669"/>
    <property type="project" value="UniProtKB-KW"/>
</dbReference>